<name>PMN14_PINFU</name>
<organism>
    <name type="scientific">Pinctada fucata</name>
    <name type="common">Akoya pearl oyster</name>
    <name type="synonym">Pinctada imbricata fucata</name>
    <dbReference type="NCBI Taxonomy" id="50426"/>
    <lineage>
        <taxon>Eukaryota</taxon>
        <taxon>Metazoa</taxon>
        <taxon>Spiralia</taxon>
        <taxon>Lophotrochozoa</taxon>
        <taxon>Mollusca</taxon>
        <taxon>Bivalvia</taxon>
        <taxon>Autobranchia</taxon>
        <taxon>Pteriomorphia</taxon>
        <taxon>Pterioida</taxon>
        <taxon>Pterioidea</taxon>
        <taxon>Pteriidae</taxon>
        <taxon>Pinctada</taxon>
    </lineage>
</organism>
<reference evidence="4 5" key="1">
    <citation type="journal article" date="2004" name="Biochem. J.">
        <title>Characterization of Prismalin-14, a novel matrix protein from the prismatic layer of the Japanese pearl oyster (Pinctada fucata).</title>
        <authorList>
            <person name="Suzuki M."/>
            <person name="Murayama E."/>
            <person name="Inoue H."/>
            <person name="Ozaki N."/>
            <person name="Tohse H."/>
            <person name="Kogure T."/>
            <person name="Nagasawa H."/>
        </authorList>
    </citation>
    <scope>NUCLEOTIDE SEQUENCE [MRNA]</scope>
    <scope>PROTEIN SEQUENCE OF 17-121</scope>
    <scope>PYROGLUTAMATE FORMATION AT GLN-17</scope>
    <scope>FUNCTION</scope>
    <scope>TISSUE SPECIFICITY</scope>
    <scope>MASS SPECTROMETRY</scope>
    <source>
        <tissue evidence="2">Shell</tissue>
    </source>
</reference>
<feature type="signal peptide" evidence="2">
    <location>
        <begin position="1"/>
        <end position="16"/>
    </location>
</feature>
<feature type="chain" id="PRO_0000022070" description="Prismalin-14" evidence="2">
    <location>
        <begin position="17"/>
        <end position="121"/>
    </location>
</feature>
<feature type="repeat" description="1" evidence="1">
    <location>
        <begin position="48"/>
        <end position="51"/>
    </location>
</feature>
<feature type="repeat" description="2" evidence="1">
    <location>
        <begin position="52"/>
        <end position="55"/>
    </location>
</feature>
<feature type="repeat" description="3" evidence="1">
    <location>
        <begin position="56"/>
        <end position="59"/>
    </location>
</feature>
<feature type="repeat" description="4" evidence="1">
    <location>
        <begin position="60"/>
        <end position="63"/>
    </location>
</feature>
<feature type="region of interest" description="4 X 4 AA approximate tandem repeats of P-I-Y-R">
    <location>
        <begin position="48"/>
        <end position="63"/>
    </location>
</feature>
<feature type="modified residue" description="Pyrrolidone carboxylic acid" evidence="3">
    <location>
        <position position="17"/>
    </location>
</feature>
<sequence length="121" mass="13491">MRSLLVLLALAACASAQYFFRGGDDDNGFFGGDDDNGYFGYFPRFSYPIYRPIYRPIYYPQIIRPFYGYGYGGFNGGYGGLGLYGGYGGFGGYGYRPFSYGYNPFSYGYYGFGDDDGGFDD</sequence>
<evidence type="ECO:0000255" key="1"/>
<evidence type="ECO:0000269" key="2">
    <source>
    </source>
</evidence>
<evidence type="ECO:0000303" key="3">
    <source>
    </source>
</evidence>
<evidence type="ECO:0000305" key="4"/>
<evidence type="ECO:0000312" key="5">
    <source>
        <dbReference type="EMBL" id="BAD27406.1"/>
    </source>
</evidence>
<keyword id="KW-0106">Calcium</keyword>
<keyword id="KW-0903">Direct protein sequencing</keyword>
<keyword id="KW-0873">Pyrrolidone carboxylic acid</keyword>
<keyword id="KW-0677">Repeat</keyword>
<keyword id="KW-0732">Signal</keyword>
<accession>Q6F4C6</accession>
<protein>
    <recommendedName>
        <fullName>Prismalin-14</fullName>
    </recommendedName>
</protein>
<dbReference type="EMBL" id="AB159512">
    <property type="protein sequence ID" value="BAD27406.1"/>
    <property type="molecule type" value="mRNA"/>
</dbReference>
<dbReference type="GO" id="GO:0005509">
    <property type="term" value="F:calcium ion binding"/>
    <property type="evidence" value="ECO:0000314"/>
    <property type="project" value="UniProtKB"/>
</dbReference>
<dbReference type="GO" id="GO:0031215">
    <property type="term" value="P:shell calcification"/>
    <property type="evidence" value="ECO:0000303"/>
    <property type="project" value="UniProtKB"/>
</dbReference>
<proteinExistence type="evidence at protein level"/>
<comment type="function">
    <text evidence="2 3">Displays inhibitory activity against calcium carbonate precipitation, binds calcium and affects crystallization of calcium carbonate in vitro. May be involved in calcification of the prismatic layer of the shell.</text>
</comment>
<comment type="tissue specificity">
    <text evidence="2">Expressed only at the mantle edge where it is found predominantly in the inner side of the outer mantle fold.</text>
</comment>
<comment type="mass spectrometry" mass="11890.8" method="MALDI" evidence="2"/>